<proteinExistence type="inferred from homology"/>
<keyword id="KW-0067">ATP-binding</keyword>
<keyword id="KW-0963">Cytoplasm</keyword>
<keyword id="KW-0227">DNA damage</keyword>
<keyword id="KW-0233">DNA recombination</keyword>
<keyword id="KW-0234">DNA repair</keyword>
<keyword id="KW-0238">DNA-binding</keyword>
<keyword id="KW-0547">Nucleotide-binding</keyword>
<keyword id="KW-0742">SOS response</keyword>
<feature type="chain" id="PRO_1000114328" description="Protein RecA">
    <location>
        <begin position="1"/>
        <end position="354"/>
    </location>
</feature>
<feature type="binding site" evidence="1">
    <location>
        <begin position="75"/>
        <end position="82"/>
    </location>
    <ligand>
        <name>ATP</name>
        <dbReference type="ChEBI" id="CHEBI:30616"/>
    </ligand>
</feature>
<accession>B2AHB8</accession>
<gene>
    <name evidence="1" type="primary">recA</name>
    <name type="ordered locus">RALTA_A0499</name>
</gene>
<sequence length="354" mass="37564">MDDKKAGAGVSAEKQKALAAALSQIEKQFGKGSIMRLGDGEVEKDIQVVSTGSLGLDIALGVGGLPRGRVVEIYGPESSGKTTLTLQVVAEMQKLGGTCAFIDAEHALDVNYASKLGVNVGDLLISQPDTGEQALEITDALVRSGSIDLIIIDSVAALVPKAEIEGEMGDSLPGLQARLMSQALRKLTGTIKRTNCLVIFINQIRMKIGVMFGSPETTTGGNALKFYASVRLDIRRIGSIKKGDDVIGNETKVKVVKNKVSPPFREAFFDILYGQGISRQGEIIDLGVDAKIVEKSGAWYSYNGEKIGQGKDNAREYLRENPDIAAEIENKVRAALGVVAMNPTAAAVAATVED</sequence>
<reference key="1">
    <citation type="journal article" date="2008" name="Genome Res.">
        <title>Genome sequence of the beta-rhizobium Cupriavidus taiwanensis and comparative genomics of rhizobia.</title>
        <authorList>
            <person name="Amadou C."/>
            <person name="Pascal G."/>
            <person name="Mangenot S."/>
            <person name="Glew M."/>
            <person name="Bontemps C."/>
            <person name="Capela D."/>
            <person name="Carrere S."/>
            <person name="Cruveiller S."/>
            <person name="Dossat C."/>
            <person name="Lajus A."/>
            <person name="Marchetti M."/>
            <person name="Poinsot V."/>
            <person name="Rouy Z."/>
            <person name="Servin B."/>
            <person name="Saad M."/>
            <person name="Schenowitz C."/>
            <person name="Barbe V."/>
            <person name="Batut J."/>
            <person name="Medigue C."/>
            <person name="Masson-Boivin C."/>
        </authorList>
    </citation>
    <scope>NUCLEOTIDE SEQUENCE [LARGE SCALE GENOMIC DNA]</scope>
    <source>
        <strain>DSM 17343 / BCRC 17206 / CCUG 44338 / CIP 107171 / LMG 19424 / R1</strain>
    </source>
</reference>
<comment type="function">
    <text evidence="1">Can catalyze the hydrolysis of ATP in the presence of single-stranded DNA, the ATP-dependent uptake of single-stranded DNA by duplex DNA, and the ATP-dependent hybridization of homologous single-stranded DNAs. It interacts with LexA causing its activation and leading to its autocatalytic cleavage.</text>
</comment>
<comment type="subcellular location">
    <subcellularLocation>
        <location evidence="1">Cytoplasm</location>
    </subcellularLocation>
</comment>
<comment type="similarity">
    <text evidence="1">Belongs to the RecA family.</text>
</comment>
<dbReference type="EMBL" id="CU633749">
    <property type="protein sequence ID" value="CAP63167.1"/>
    <property type="molecule type" value="Genomic_DNA"/>
</dbReference>
<dbReference type="RefSeq" id="WP_012351827.1">
    <property type="nucleotide sequence ID" value="NC_010528.1"/>
</dbReference>
<dbReference type="SMR" id="B2AHB8"/>
<dbReference type="GeneID" id="29761346"/>
<dbReference type="KEGG" id="cti:RALTA_A0499"/>
<dbReference type="eggNOG" id="COG0468">
    <property type="taxonomic scope" value="Bacteria"/>
</dbReference>
<dbReference type="HOGENOM" id="CLU_040469_3_2_4"/>
<dbReference type="BioCyc" id="CTAI977880:RALTA_RS02445-MONOMER"/>
<dbReference type="Proteomes" id="UP000001692">
    <property type="component" value="Chromosome 1"/>
</dbReference>
<dbReference type="GO" id="GO:0005829">
    <property type="term" value="C:cytosol"/>
    <property type="evidence" value="ECO:0007669"/>
    <property type="project" value="TreeGrafter"/>
</dbReference>
<dbReference type="GO" id="GO:0005524">
    <property type="term" value="F:ATP binding"/>
    <property type="evidence" value="ECO:0007669"/>
    <property type="project" value="UniProtKB-UniRule"/>
</dbReference>
<dbReference type="GO" id="GO:0016887">
    <property type="term" value="F:ATP hydrolysis activity"/>
    <property type="evidence" value="ECO:0007669"/>
    <property type="project" value="InterPro"/>
</dbReference>
<dbReference type="GO" id="GO:0140664">
    <property type="term" value="F:ATP-dependent DNA damage sensor activity"/>
    <property type="evidence" value="ECO:0007669"/>
    <property type="project" value="InterPro"/>
</dbReference>
<dbReference type="GO" id="GO:0003684">
    <property type="term" value="F:damaged DNA binding"/>
    <property type="evidence" value="ECO:0007669"/>
    <property type="project" value="UniProtKB-UniRule"/>
</dbReference>
<dbReference type="GO" id="GO:0003697">
    <property type="term" value="F:single-stranded DNA binding"/>
    <property type="evidence" value="ECO:0007669"/>
    <property type="project" value="UniProtKB-UniRule"/>
</dbReference>
<dbReference type="GO" id="GO:0006310">
    <property type="term" value="P:DNA recombination"/>
    <property type="evidence" value="ECO:0007669"/>
    <property type="project" value="UniProtKB-UniRule"/>
</dbReference>
<dbReference type="GO" id="GO:0006281">
    <property type="term" value="P:DNA repair"/>
    <property type="evidence" value="ECO:0007669"/>
    <property type="project" value="UniProtKB-UniRule"/>
</dbReference>
<dbReference type="GO" id="GO:0009432">
    <property type="term" value="P:SOS response"/>
    <property type="evidence" value="ECO:0007669"/>
    <property type="project" value="UniProtKB-UniRule"/>
</dbReference>
<dbReference type="CDD" id="cd00983">
    <property type="entry name" value="RecA"/>
    <property type="match status" value="1"/>
</dbReference>
<dbReference type="FunFam" id="3.40.50.300:FF:000087">
    <property type="entry name" value="Recombinase RecA"/>
    <property type="match status" value="1"/>
</dbReference>
<dbReference type="Gene3D" id="3.40.50.300">
    <property type="entry name" value="P-loop containing nucleotide triphosphate hydrolases"/>
    <property type="match status" value="1"/>
</dbReference>
<dbReference type="HAMAP" id="MF_00268">
    <property type="entry name" value="RecA"/>
    <property type="match status" value="1"/>
</dbReference>
<dbReference type="InterPro" id="IPR003593">
    <property type="entry name" value="AAA+_ATPase"/>
</dbReference>
<dbReference type="InterPro" id="IPR013765">
    <property type="entry name" value="DNA_recomb/repair_RecA"/>
</dbReference>
<dbReference type="InterPro" id="IPR020584">
    <property type="entry name" value="DNA_recomb/repair_RecA_CS"/>
</dbReference>
<dbReference type="InterPro" id="IPR027417">
    <property type="entry name" value="P-loop_NTPase"/>
</dbReference>
<dbReference type="InterPro" id="IPR049261">
    <property type="entry name" value="RecA-like_C"/>
</dbReference>
<dbReference type="InterPro" id="IPR049428">
    <property type="entry name" value="RecA-like_N"/>
</dbReference>
<dbReference type="InterPro" id="IPR020588">
    <property type="entry name" value="RecA_ATP-bd"/>
</dbReference>
<dbReference type="InterPro" id="IPR023400">
    <property type="entry name" value="RecA_C_sf"/>
</dbReference>
<dbReference type="InterPro" id="IPR020587">
    <property type="entry name" value="RecA_monomer-monomer_interface"/>
</dbReference>
<dbReference type="NCBIfam" id="TIGR02012">
    <property type="entry name" value="tigrfam_recA"/>
    <property type="match status" value="1"/>
</dbReference>
<dbReference type="PANTHER" id="PTHR45900:SF1">
    <property type="entry name" value="MITOCHONDRIAL DNA REPAIR PROTEIN RECA HOMOLOG-RELATED"/>
    <property type="match status" value="1"/>
</dbReference>
<dbReference type="PANTHER" id="PTHR45900">
    <property type="entry name" value="RECA"/>
    <property type="match status" value="1"/>
</dbReference>
<dbReference type="Pfam" id="PF00154">
    <property type="entry name" value="RecA"/>
    <property type="match status" value="1"/>
</dbReference>
<dbReference type="Pfam" id="PF21096">
    <property type="entry name" value="RecA_C"/>
    <property type="match status" value="1"/>
</dbReference>
<dbReference type="PRINTS" id="PR00142">
    <property type="entry name" value="RECA"/>
</dbReference>
<dbReference type="SMART" id="SM00382">
    <property type="entry name" value="AAA"/>
    <property type="match status" value="1"/>
</dbReference>
<dbReference type="SUPFAM" id="SSF52540">
    <property type="entry name" value="P-loop containing nucleoside triphosphate hydrolases"/>
    <property type="match status" value="1"/>
</dbReference>
<dbReference type="SUPFAM" id="SSF54752">
    <property type="entry name" value="RecA protein, C-terminal domain"/>
    <property type="match status" value="1"/>
</dbReference>
<dbReference type="PROSITE" id="PS00321">
    <property type="entry name" value="RECA_1"/>
    <property type="match status" value="1"/>
</dbReference>
<dbReference type="PROSITE" id="PS50162">
    <property type="entry name" value="RECA_2"/>
    <property type="match status" value="1"/>
</dbReference>
<dbReference type="PROSITE" id="PS50163">
    <property type="entry name" value="RECA_3"/>
    <property type="match status" value="1"/>
</dbReference>
<organism>
    <name type="scientific">Cupriavidus taiwanensis (strain DSM 17343 / BCRC 17206 / CCUG 44338 / CIP 107171 / LMG 19424 / R1)</name>
    <name type="common">Ralstonia taiwanensis (strain LMG 19424)</name>
    <dbReference type="NCBI Taxonomy" id="977880"/>
    <lineage>
        <taxon>Bacteria</taxon>
        <taxon>Pseudomonadati</taxon>
        <taxon>Pseudomonadota</taxon>
        <taxon>Betaproteobacteria</taxon>
        <taxon>Burkholderiales</taxon>
        <taxon>Burkholderiaceae</taxon>
        <taxon>Cupriavidus</taxon>
    </lineage>
</organism>
<protein>
    <recommendedName>
        <fullName evidence="1">Protein RecA</fullName>
    </recommendedName>
    <alternativeName>
        <fullName evidence="1">Recombinase A</fullName>
    </alternativeName>
</protein>
<name>RECA_CUPTR</name>
<evidence type="ECO:0000255" key="1">
    <source>
        <dbReference type="HAMAP-Rule" id="MF_00268"/>
    </source>
</evidence>